<gene>
    <name evidence="1" type="primary">thrB</name>
    <name type="ordered locus">UTI89_C0003</name>
</gene>
<sequence>MVKVYAPASSANMSVGFDVLGAAVTPVDGALLGDVVTVEAAETFSLNNLGRFADKLPSEPRENIVYQCWERFCQELGKQIPVAMTLEKNMPIGSGLGSSACSVVAALMAMNEHCGKPLNDTRLLALMGELEGRISGSIHYDNVAPCFLGGMQLMIEENDIISQQVPGFDEWLWVLAYPGIKVSTAEARAILPAQYRRQDCIAHGRHLAGFIHACYSRQPELAAKLMKDVIAEPYRERLLPGFRQARQAVAEIGAVASGISGSGPTLFALCDKPDTAQRVADWLGKNYLQNQEGFVHICRLDTAGARVLEN</sequence>
<protein>
    <recommendedName>
        <fullName evidence="1">Homoserine kinase</fullName>
        <shortName evidence="1">HK</shortName>
        <shortName evidence="1">HSK</shortName>
        <ecNumber evidence="1">2.7.1.39</ecNumber>
    </recommendedName>
</protein>
<proteinExistence type="inferred from homology"/>
<name>KHSE_ECOUT</name>
<accession>Q1RGK1</accession>
<keyword id="KW-0028">Amino-acid biosynthesis</keyword>
<keyword id="KW-0067">ATP-binding</keyword>
<keyword id="KW-0963">Cytoplasm</keyword>
<keyword id="KW-0418">Kinase</keyword>
<keyword id="KW-0547">Nucleotide-binding</keyword>
<keyword id="KW-0791">Threonine biosynthesis</keyword>
<keyword id="KW-0808">Transferase</keyword>
<dbReference type="EC" id="2.7.1.39" evidence="1"/>
<dbReference type="EMBL" id="CP000243">
    <property type="protein sequence ID" value="ABE05513.1"/>
    <property type="molecule type" value="Genomic_DNA"/>
</dbReference>
<dbReference type="RefSeq" id="WP_000241660.1">
    <property type="nucleotide sequence ID" value="NZ_CP064825.1"/>
</dbReference>
<dbReference type="SMR" id="Q1RGK1"/>
<dbReference type="GeneID" id="75202912"/>
<dbReference type="KEGG" id="eci:UTI89_C0003"/>
<dbReference type="HOGENOM" id="CLU_041243_1_1_6"/>
<dbReference type="UniPathway" id="UPA00050">
    <property type="reaction ID" value="UER00064"/>
</dbReference>
<dbReference type="Proteomes" id="UP000001952">
    <property type="component" value="Chromosome"/>
</dbReference>
<dbReference type="GO" id="GO:0005737">
    <property type="term" value="C:cytoplasm"/>
    <property type="evidence" value="ECO:0007669"/>
    <property type="project" value="UniProtKB-SubCell"/>
</dbReference>
<dbReference type="GO" id="GO:0005524">
    <property type="term" value="F:ATP binding"/>
    <property type="evidence" value="ECO:0007669"/>
    <property type="project" value="UniProtKB-UniRule"/>
</dbReference>
<dbReference type="GO" id="GO:0004413">
    <property type="term" value="F:homoserine kinase activity"/>
    <property type="evidence" value="ECO:0007669"/>
    <property type="project" value="UniProtKB-UniRule"/>
</dbReference>
<dbReference type="GO" id="GO:0009088">
    <property type="term" value="P:threonine biosynthetic process"/>
    <property type="evidence" value="ECO:0007669"/>
    <property type="project" value="UniProtKB-UniRule"/>
</dbReference>
<dbReference type="FunFam" id="3.30.230.10:FF:000020">
    <property type="entry name" value="Homoserine kinase"/>
    <property type="match status" value="1"/>
</dbReference>
<dbReference type="FunFam" id="3.30.70.890:FF:000002">
    <property type="entry name" value="Homoserine kinase"/>
    <property type="match status" value="1"/>
</dbReference>
<dbReference type="Gene3D" id="3.30.230.10">
    <property type="match status" value="1"/>
</dbReference>
<dbReference type="Gene3D" id="3.30.70.890">
    <property type="entry name" value="GHMP kinase, C-terminal domain"/>
    <property type="match status" value="1"/>
</dbReference>
<dbReference type="HAMAP" id="MF_00384">
    <property type="entry name" value="Homoser_kinase"/>
    <property type="match status" value="1"/>
</dbReference>
<dbReference type="InterPro" id="IPR013750">
    <property type="entry name" value="GHMP_kinase_C_dom"/>
</dbReference>
<dbReference type="InterPro" id="IPR036554">
    <property type="entry name" value="GHMP_kinase_C_sf"/>
</dbReference>
<dbReference type="InterPro" id="IPR006204">
    <property type="entry name" value="GHMP_kinase_N_dom"/>
</dbReference>
<dbReference type="InterPro" id="IPR006203">
    <property type="entry name" value="GHMP_knse_ATP-bd_CS"/>
</dbReference>
<dbReference type="InterPro" id="IPR000870">
    <property type="entry name" value="Homoserine_kinase"/>
</dbReference>
<dbReference type="InterPro" id="IPR020568">
    <property type="entry name" value="Ribosomal_Su5_D2-typ_SF"/>
</dbReference>
<dbReference type="InterPro" id="IPR014721">
    <property type="entry name" value="Ribsml_uS5_D2-typ_fold_subgr"/>
</dbReference>
<dbReference type="NCBIfam" id="NF002288">
    <property type="entry name" value="PRK01212.1-4"/>
    <property type="match status" value="1"/>
</dbReference>
<dbReference type="NCBIfam" id="TIGR00191">
    <property type="entry name" value="thrB"/>
    <property type="match status" value="1"/>
</dbReference>
<dbReference type="PANTHER" id="PTHR20861:SF1">
    <property type="entry name" value="HOMOSERINE KINASE"/>
    <property type="match status" value="1"/>
</dbReference>
<dbReference type="PANTHER" id="PTHR20861">
    <property type="entry name" value="HOMOSERINE/4-DIPHOSPHOCYTIDYL-2-C-METHYL-D-ERYTHRITOL KINASE"/>
    <property type="match status" value="1"/>
</dbReference>
<dbReference type="Pfam" id="PF08544">
    <property type="entry name" value="GHMP_kinases_C"/>
    <property type="match status" value="1"/>
</dbReference>
<dbReference type="Pfam" id="PF00288">
    <property type="entry name" value="GHMP_kinases_N"/>
    <property type="match status" value="1"/>
</dbReference>
<dbReference type="PIRSF" id="PIRSF000676">
    <property type="entry name" value="Homoser_kin"/>
    <property type="match status" value="1"/>
</dbReference>
<dbReference type="PRINTS" id="PR00958">
    <property type="entry name" value="HOMSERKINASE"/>
</dbReference>
<dbReference type="SUPFAM" id="SSF55060">
    <property type="entry name" value="GHMP Kinase, C-terminal domain"/>
    <property type="match status" value="1"/>
</dbReference>
<dbReference type="SUPFAM" id="SSF54211">
    <property type="entry name" value="Ribosomal protein S5 domain 2-like"/>
    <property type="match status" value="1"/>
</dbReference>
<dbReference type="PROSITE" id="PS00627">
    <property type="entry name" value="GHMP_KINASES_ATP"/>
    <property type="match status" value="1"/>
</dbReference>
<feature type="chain" id="PRO_1000049131" description="Homoserine kinase">
    <location>
        <begin position="1"/>
        <end position="310"/>
    </location>
</feature>
<feature type="binding site" evidence="1">
    <location>
        <begin position="91"/>
        <end position="101"/>
    </location>
    <ligand>
        <name>ATP</name>
        <dbReference type="ChEBI" id="CHEBI:30616"/>
    </ligand>
</feature>
<comment type="function">
    <text evidence="1">Catalyzes the ATP-dependent phosphorylation of L-homoserine to L-homoserine phosphate.</text>
</comment>
<comment type="catalytic activity">
    <reaction evidence="1">
        <text>L-homoserine + ATP = O-phospho-L-homoserine + ADP + H(+)</text>
        <dbReference type="Rhea" id="RHEA:13985"/>
        <dbReference type="ChEBI" id="CHEBI:15378"/>
        <dbReference type="ChEBI" id="CHEBI:30616"/>
        <dbReference type="ChEBI" id="CHEBI:57476"/>
        <dbReference type="ChEBI" id="CHEBI:57590"/>
        <dbReference type="ChEBI" id="CHEBI:456216"/>
        <dbReference type="EC" id="2.7.1.39"/>
    </reaction>
</comment>
<comment type="pathway">
    <text evidence="1">Amino-acid biosynthesis; L-threonine biosynthesis; L-threonine from L-aspartate: step 4/5.</text>
</comment>
<comment type="subcellular location">
    <subcellularLocation>
        <location evidence="1">Cytoplasm</location>
    </subcellularLocation>
</comment>
<comment type="similarity">
    <text evidence="1">Belongs to the GHMP kinase family. Homoserine kinase subfamily.</text>
</comment>
<organism>
    <name type="scientific">Escherichia coli (strain UTI89 / UPEC)</name>
    <dbReference type="NCBI Taxonomy" id="364106"/>
    <lineage>
        <taxon>Bacteria</taxon>
        <taxon>Pseudomonadati</taxon>
        <taxon>Pseudomonadota</taxon>
        <taxon>Gammaproteobacteria</taxon>
        <taxon>Enterobacterales</taxon>
        <taxon>Enterobacteriaceae</taxon>
        <taxon>Escherichia</taxon>
    </lineage>
</organism>
<evidence type="ECO:0000255" key="1">
    <source>
        <dbReference type="HAMAP-Rule" id="MF_00384"/>
    </source>
</evidence>
<reference key="1">
    <citation type="journal article" date="2006" name="Proc. Natl. Acad. Sci. U.S.A.">
        <title>Identification of genes subject to positive selection in uropathogenic strains of Escherichia coli: a comparative genomics approach.</title>
        <authorList>
            <person name="Chen S.L."/>
            <person name="Hung C.-S."/>
            <person name="Xu J."/>
            <person name="Reigstad C.S."/>
            <person name="Magrini V."/>
            <person name="Sabo A."/>
            <person name="Blasiar D."/>
            <person name="Bieri T."/>
            <person name="Meyer R.R."/>
            <person name="Ozersky P."/>
            <person name="Armstrong J.R."/>
            <person name="Fulton R.S."/>
            <person name="Latreille J.P."/>
            <person name="Spieth J."/>
            <person name="Hooton T.M."/>
            <person name="Mardis E.R."/>
            <person name="Hultgren S.J."/>
            <person name="Gordon J.I."/>
        </authorList>
    </citation>
    <scope>NUCLEOTIDE SEQUENCE [LARGE SCALE GENOMIC DNA]</scope>
    <source>
        <strain>UTI89 / UPEC</strain>
    </source>
</reference>